<sequence length="1029" mass="113875">MISIYGLVMALMMASVLASSSRFQRVPQSQSVVENESVKFECESTDSYSELHYDWLHNAHRIAYDKRVHQIGSNLHIEAVRRTEDVGNYVCIATNLASGAREASPPAKLSVIYLESASVQLLGSNRNELLLKCHVEGASGDLEPLEIEWYRNSEKLSTWKNVQLDQHRLIIRQPGSEDDGLYRCTASNAAGRVMSKQGYVYQSSVKCLPRLPRRKNQKMMESWDKQTFLCRGKRGGAAGLESLPAAPEDLRIVQGPVGQSIIKEGEPTALTCLYELPDELKNQRIQLRWRKDGKLLRQVELGGSAPIIGHSFDSGKDALLREDARLVLHKQNGTLSFASIIASDAGQYQCQLQLEAHAPISSSPGILEVIEQLKFVPQPTSKNLELDAVVAKVHCKAQGTPTPQVQWIRDGENTTLPDQVEVDANGTLIFRNVNSEHRGNYTCLATNTQGQINATVAINVVVTPKFSVPPVGPIETSEQGTAVMHCQAIGDPKPTIQWDKDLKYLSENNTDRERFRFLENGTLEIRNVQVEDEGSYGCTIGNSAGLKREDVQLVVKTTGDGFAPEESGGDGFLVTRAVLITMTVALAYIVLVVGLMLWCRYRRQARKARLNDLSTKEAGGEQPDAAGNGKGSEQEPCLSKQHNGHSKSRSKSSGDAQKSDDTACSQQSRASKKSAHIYEQLALPRSGLSELIQIGRGEFGDVFVGKLKATLVTSPSDKDADTEKQHSNSENGSGGSGSGSTTLSTLNEKRRSKTSMDDIEEIKEEEQEQHNQSGLDQLVLVKALNKVKDEQACQEFRRQLDLLRAISHKGVVRLFGLCREKDPHYMVLEYTDWGDLKQFLLATAGKVNTATAGSSSPPPLTTSQVLAVAYQIARGMDAIYRARFTHRDLATRNCVISSEFIVKVSYPALCKDKYSREYHKHRNTLLPIRWLAPECIQEDEYTTKSDIFAYGVVVWELFNQATKLPHEELTNEQVVQRSQAGSLEWSVAEATPDSLREILLSCWVSNPKERPSFSQLGAALSKAMQIAEK</sequence>
<comment type="function">
    <text evidence="1">Acts as a calcium-dependent, homophilic cell adhesion molecule that regulates neural recognition during the development of the nervous system. Component of the repulsive Plexin signaling response to regulate motor axon guidance at the embryonic stage. Also component of a receptor complex that is required in the adult visual system to innervate the lamina layer; specific targeting of R1-R6 axons (By similarity).</text>
</comment>
<comment type="subunit">
    <text evidence="1">Interacts with plexA; component of a receptor complex that mediates the repulsive signaling in response to Semaphorin ligands.</text>
</comment>
<comment type="subcellular location">
    <subcellularLocation>
        <location evidence="2">Cell membrane</location>
        <topology evidence="2">Single-pass type I membrane protein</topology>
    </subcellularLocation>
</comment>
<comment type="similarity">
    <text evidence="5">Belongs to the protein kinase superfamily. Tyr protein kinase family. Insulin receptor subfamily.</text>
</comment>
<comment type="caution">
    <text evidence="7">The D.melanogaster ortholog of this protein has been proposed to undergo autophosphorylation on tyrosine residues which is induced in response to cell adhesion (PubMed:1371458). However as mammalian orthologs of this protein seem to lack kinase activity it may be that this protein associates with, and is phosphorylated by, an unknown active tyrosine kinase.</text>
</comment>
<gene>
    <name evidence="2" type="primary">otk</name>
    <name type="ORF">GM20393</name>
</gene>
<dbReference type="EMBL" id="CH480816">
    <property type="protein sequence ID" value="EDW47479.1"/>
    <property type="molecule type" value="Genomic_DNA"/>
</dbReference>
<dbReference type="RefSeq" id="XP_002033466.1">
    <property type="nucleotide sequence ID" value="XM_002033430.1"/>
</dbReference>
<dbReference type="SMR" id="B4HNW4"/>
<dbReference type="STRING" id="7238.B4HNW4"/>
<dbReference type="GlyCosmos" id="B4HNW4">
    <property type="glycosylation" value="8 sites, No reported glycans"/>
</dbReference>
<dbReference type="EnsemblMetazoa" id="FBtr0203378">
    <property type="protein sequence ID" value="FBpp0201870"/>
    <property type="gene ID" value="FBgn0175276"/>
</dbReference>
<dbReference type="EnsemblMetazoa" id="XM_002033430.2">
    <property type="protein sequence ID" value="XP_002033466.2"/>
    <property type="gene ID" value="LOC6608743"/>
</dbReference>
<dbReference type="GeneID" id="6608743"/>
<dbReference type="KEGG" id="dse:6608743"/>
<dbReference type="CTD" id="36283"/>
<dbReference type="HOGENOM" id="CLU_012268_0_0_1"/>
<dbReference type="OMA" id="SHLHIEA"/>
<dbReference type="PhylomeDB" id="B4HNW4"/>
<dbReference type="ChiTaRS" id="otk">
    <property type="organism name" value="fly"/>
</dbReference>
<dbReference type="Proteomes" id="UP000001292">
    <property type="component" value="Unassembled WGS sequence"/>
</dbReference>
<dbReference type="GO" id="GO:0030424">
    <property type="term" value="C:axon"/>
    <property type="evidence" value="ECO:0007669"/>
    <property type="project" value="EnsemblMetazoa"/>
</dbReference>
<dbReference type="GO" id="GO:0005886">
    <property type="term" value="C:plasma membrane"/>
    <property type="evidence" value="ECO:0000250"/>
    <property type="project" value="UniProtKB"/>
</dbReference>
<dbReference type="GO" id="GO:0043235">
    <property type="term" value="C:receptor complex"/>
    <property type="evidence" value="ECO:0007669"/>
    <property type="project" value="TreeGrafter"/>
</dbReference>
<dbReference type="GO" id="GO:0005524">
    <property type="term" value="F:ATP binding"/>
    <property type="evidence" value="ECO:0007669"/>
    <property type="project" value="InterPro"/>
</dbReference>
<dbReference type="GO" id="GO:0050839">
    <property type="term" value="F:cell adhesion molecule binding"/>
    <property type="evidence" value="ECO:0000250"/>
    <property type="project" value="UniProtKB"/>
</dbReference>
<dbReference type="GO" id="GO:0046982">
    <property type="term" value="F:protein heterodimerization activity"/>
    <property type="evidence" value="ECO:0007669"/>
    <property type="project" value="EnsemblMetazoa"/>
</dbReference>
<dbReference type="GO" id="GO:0042803">
    <property type="term" value="F:protein homodimerization activity"/>
    <property type="evidence" value="ECO:0007669"/>
    <property type="project" value="EnsemblMetazoa"/>
</dbReference>
<dbReference type="GO" id="GO:0004672">
    <property type="term" value="F:protein kinase activity"/>
    <property type="evidence" value="ECO:0000250"/>
    <property type="project" value="UniProtKB"/>
</dbReference>
<dbReference type="GO" id="GO:0038023">
    <property type="term" value="F:signaling receptor activity"/>
    <property type="evidence" value="ECO:0000250"/>
    <property type="project" value="UniProtKB"/>
</dbReference>
<dbReference type="GO" id="GO:0004714">
    <property type="term" value="F:transmembrane receptor protein tyrosine kinase activity"/>
    <property type="evidence" value="ECO:0007669"/>
    <property type="project" value="EnsemblMetazoa"/>
</dbReference>
<dbReference type="GO" id="GO:0017147">
    <property type="term" value="F:Wnt-protein binding"/>
    <property type="evidence" value="ECO:0007669"/>
    <property type="project" value="EnsemblMetazoa"/>
</dbReference>
<dbReference type="GO" id="GO:0007155">
    <property type="term" value="P:cell adhesion"/>
    <property type="evidence" value="ECO:0000250"/>
    <property type="project" value="UniProtKB"/>
</dbReference>
<dbReference type="GO" id="GO:0007169">
    <property type="term" value="P:cell surface receptor protein tyrosine kinase signaling pathway"/>
    <property type="evidence" value="ECO:0007669"/>
    <property type="project" value="TreeGrafter"/>
</dbReference>
<dbReference type="GO" id="GO:0048804">
    <property type="term" value="P:imaginal disc-derived female genitalia morphogenesis"/>
    <property type="evidence" value="ECO:0007669"/>
    <property type="project" value="EnsemblMetazoa"/>
</dbReference>
<dbReference type="GO" id="GO:0048803">
    <property type="term" value="P:imaginal disc-derived male genitalia morphogenesis"/>
    <property type="evidence" value="ECO:0007669"/>
    <property type="project" value="EnsemblMetazoa"/>
</dbReference>
<dbReference type="GO" id="GO:0035260">
    <property type="term" value="P:internal genitalia morphogenesis"/>
    <property type="evidence" value="ECO:0007669"/>
    <property type="project" value="EnsemblMetazoa"/>
</dbReference>
<dbReference type="GO" id="GO:0090090">
    <property type="term" value="P:negative regulation of canonical Wnt signaling pathway"/>
    <property type="evidence" value="ECO:0007669"/>
    <property type="project" value="EnsemblMetazoa"/>
</dbReference>
<dbReference type="GO" id="GO:0072499">
    <property type="term" value="P:photoreceptor cell axon guidance"/>
    <property type="evidence" value="ECO:0007669"/>
    <property type="project" value="EnsemblMetazoa"/>
</dbReference>
<dbReference type="GO" id="GO:0010976">
    <property type="term" value="P:positive regulation of neuron projection development"/>
    <property type="evidence" value="ECO:0007669"/>
    <property type="project" value="TreeGrafter"/>
</dbReference>
<dbReference type="GO" id="GO:0051897">
    <property type="term" value="P:positive regulation of phosphatidylinositol 3-kinase/protein kinase B signal transduction"/>
    <property type="evidence" value="ECO:0007669"/>
    <property type="project" value="TreeGrafter"/>
</dbReference>
<dbReference type="GO" id="GO:0031290">
    <property type="term" value="P:retinal ganglion cell axon guidance"/>
    <property type="evidence" value="ECO:0000250"/>
    <property type="project" value="UniProtKB"/>
</dbReference>
<dbReference type="CDD" id="cd00096">
    <property type="entry name" value="Ig"/>
    <property type="match status" value="1"/>
</dbReference>
<dbReference type="CDD" id="cd05046">
    <property type="entry name" value="PTK_CCK4"/>
    <property type="match status" value="1"/>
</dbReference>
<dbReference type="FunFam" id="1.10.510.10:FF:000954">
    <property type="entry name" value="Tyrosine-protein kinase-like otk"/>
    <property type="match status" value="1"/>
</dbReference>
<dbReference type="FunFam" id="2.60.40.10:FF:001805">
    <property type="entry name" value="Tyrosine-protein kinase-like otk"/>
    <property type="match status" value="1"/>
</dbReference>
<dbReference type="FunFam" id="2.60.40.10:FF:002027">
    <property type="entry name" value="Tyrosine-protein kinase-like otk"/>
    <property type="match status" value="1"/>
</dbReference>
<dbReference type="FunFam" id="2.60.40.10:FF:002086">
    <property type="entry name" value="Tyrosine-protein kinase-like otk"/>
    <property type="match status" value="1"/>
</dbReference>
<dbReference type="FunFam" id="2.60.40.10:FF:002809">
    <property type="entry name" value="Tyrosine-protein kinase-like otk"/>
    <property type="match status" value="1"/>
</dbReference>
<dbReference type="FunFam" id="3.30.200.20:FF:001776">
    <property type="entry name" value="Tyrosine-protein kinase-like otk"/>
    <property type="match status" value="1"/>
</dbReference>
<dbReference type="FunFam" id="2.60.40.10:FF:002127">
    <property type="entry name" value="tyrosine-protein kinase-like otk"/>
    <property type="match status" value="1"/>
</dbReference>
<dbReference type="Gene3D" id="2.60.40.10">
    <property type="entry name" value="Immunoglobulins"/>
    <property type="match status" value="5"/>
</dbReference>
<dbReference type="Gene3D" id="1.10.510.10">
    <property type="entry name" value="Transferase(Phosphotransferase) domain 1"/>
    <property type="match status" value="1"/>
</dbReference>
<dbReference type="InterPro" id="IPR007110">
    <property type="entry name" value="Ig-like_dom"/>
</dbReference>
<dbReference type="InterPro" id="IPR036179">
    <property type="entry name" value="Ig-like_dom_sf"/>
</dbReference>
<dbReference type="InterPro" id="IPR013783">
    <property type="entry name" value="Ig-like_fold"/>
</dbReference>
<dbReference type="InterPro" id="IPR013098">
    <property type="entry name" value="Ig_I-set"/>
</dbReference>
<dbReference type="InterPro" id="IPR003599">
    <property type="entry name" value="Ig_sub"/>
</dbReference>
<dbReference type="InterPro" id="IPR003598">
    <property type="entry name" value="Ig_sub2"/>
</dbReference>
<dbReference type="InterPro" id="IPR011009">
    <property type="entry name" value="Kinase-like_dom_sf"/>
</dbReference>
<dbReference type="InterPro" id="IPR000719">
    <property type="entry name" value="Prot_kinase_dom"/>
</dbReference>
<dbReference type="InterPro" id="IPR050122">
    <property type="entry name" value="RTK"/>
</dbReference>
<dbReference type="InterPro" id="IPR001245">
    <property type="entry name" value="Ser-Thr/Tyr_kinase_cat_dom"/>
</dbReference>
<dbReference type="InterPro" id="IPR008266">
    <property type="entry name" value="Tyr_kinase_AS"/>
</dbReference>
<dbReference type="InterPro" id="IPR020635">
    <property type="entry name" value="Tyr_kinase_cat_dom"/>
</dbReference>
<dbReference type="PANTHER" id="PTHR24416">
    <property type="entry name" value="TYROSINE-PROTEIN KINASE RECEPTOR"/>
    <property type="match status" value="1"/>
</dbReference>
<dbReference type="PANTHER" id="PTHR24416:SF349">
    <property type="entry name" value="TYROSINE-PROTEIN KINASE RYK"/>
    <property type="match status" value="1"/>
</dbReference>
<dbReference type="Pfam" id="PF07679">
    <property type="entry name" value="I-set"/>
    <property type="match status" value="3"/>
</dbReference>
<dbReference type="Pfam" id="PF13927">
    <property type="entry name" value="Ig_3"/>
    <property type="match status" value="1"/>
</dbReference>
<dbReference type="Pfam" id="PF07714">
    <property type="entry name" value="PK_Tyr_Ser-Thr"/>
    <property type="match status" value="1"/>
</dbReference>
<dbReference type="PIRSF" id="PIRSF000615">
    <property type="entry name" value="TyrPK_CSF1-R"/>
    <property type="match status" value="1"/>
</dbReference>
<dbReference type="PRINTS" id="PR00109">
    <property type="entry name" value="TYRKINASE"/>
</dbReference>
<dbReference type="SMART" id="SM00409">
    <property type="entry name" value="IG"/>
    <property type="match status" value="5"/>
</dbReference>
<dbReference type="SMART" id="SM00408">
    <property type="entry name" value="IGc2"/>
    <property type="match status" value="5"/>
</dbReference>
<dbReference type="SMART" id="SM00219">
    <property type="entry name" value="TyrKc"/>
    <property type="match status" value="1"/>
</dbReference>
<dbReference type="SUPFAM" id="SSF48726">
    <property type="entry name" value="Immunoglobulin"/>
    <property type="match status" value="4"/>
</dbReference>
<dbReference type="SUPFAM" id="SSF56112">
    <property type="entry name" value="Protein kinase-like (PK-like)"/>
    <property type="match status" value="1"/>
</dbReference>
<dbReference type="PROSITE" id="PS50835">
    <property type="entry name" value="IG_LIKE"/>
    <property type="match status" value="5"/>
</dbReference>
<dbReference type="PROSITE" id="PS50011">
    <property type="entry name" value="PROTEIN_KINASE_DOM"/>
    <property type="match status" value="1"/>
</dbReference>
<dbReference type="PROSITE" id="PS00109">
    <property type="entry name" value="PROTEIN_KINASE_TYR"/>
    <property type="match status" value="1"/>
</dbReference>
<protein>
    <recommendedName>
        <fullName evidence="2">Tyrosine-protein kinase-like otk</fullName>
    </recommendedName>
    <alternativeName>
        <fullName>Tyrosine-protein kinase-like 7 homolog</fullName>
    </alternativeName>
</protein>
<proteinExistence type="inferred from homology"/>
<name>PTK7_DROSE</name>
<evidence type="ECO:0000250" key="1"/>
<evidence type="ECO:0000250" key="2">
    <source>
        <dbReference type="UniProtKB" id="Q6AWJ9"/>
    </source>
</evidence>
<evidence type="ECO:0000255" key="3"/>
<evidence type="ECO:0000255" key="4">
    <source>
        <dbReference type="PROSITE-ProRule" id="PRU00114"/>
    </source>
</evidence>
<evidence type="ECO:0000255" key="5">
    <source>
        <dbReference type="PROSITE-ProRule" id="PRU00159"/>
    </source>
</evidence>
<evidence type="ECO:0000256" key="6">
    <source>
        <dbReference type="SAM" id="MobiDB-lite"/>
    </source>
</evidence>
<evidence type="ECO:0000305" key="7"/>
<evidence type="ECO:0000312" key="8">
    <source>
        <dbReference type="EMBL" id="EDW47479.1"/>
    </source>
</evidence>
<feature type="signal peptide" evidence="3">
    <location>
        <begin position="1"/>
        <end position="18"/>
    </location>
</feature>
<feature type="chain" id="PRO_0000388691" description="Tyrosine-protein kinase-like otk" evidence="3">
    <location>
        <begin position="19"/>
        <end position="1029"/>
    </location>
</feature>
<feature type="topological domain" description="Extracellular" evidence="3">
    <location>
        <begin position="19"/>
        <end position="577"/>
    </location>
</feature>
<feature type="transmembrane region" description="Helical" evidence="3">
    <location>
        <begin position="578"/>
        <end position="598"/>
    </location>
</feature>
<feature type="topological domain" description="Cytoplasmic" evidence="3">
    <location>
        <begin position="599"/>
        <end position="1029"/>
    </location>
</feature>
<feature type="domain" description="Ig-like C2-type 1" evidence="3">
    <location>
        <begin position="21"/>
        <end position="104"/>
    </location>
</feature>
<feature type="domain" description="Ig-like C2-type 2" evidence="3">
    <location>
        <begin position="105"/>
        <end position="195"/>
    </location>
</feature>
<feature type="domain" description="Ig-like C2-type 3" evidence="3">
    <location>
        <begin position="247"/>
        <end position="361"/>
    </location>
</feature>
<feature type="domain" description="Ig-like C2-type 4" evidence="3">
    <location>
        <begin position="364"/>
        <end position="459"/>
    </location>
</feature>
<feature type="domain" description="Ig-like C2-type 5" evidence="3">
    <location>
        <begin position="464"/>
        <end position="554"/>
    </location>
</feature>
<feature type="domain" description="Protein kinase; inactive" evidence="5 7">
    <location>
        <begin position="688"/>
        <end position="1024"/>
    </location>
</feature>
<feature type="region of interest" description="Disordered" evidence="6">
    <location>
        <begin position="613"/>
        <end position="675"/>
    </location>
</feature>
<feature type="region of interest" description="Disordered" evidence="6">
    <location>
        <begin position="714"/>
        <end position="756"/>
    </location>
</feature>
<feature type="compositionally biased region" description="Polar residues" evidence="6">
    <location>
        <begin position="651"/>
        <end position="669"/>
    </location>
</feature>
<feature type="compositionally biased region" description="Basic and acidic residues" evidence="6">
    <location>
        <begin position="716"/>
        <end position="727"/>
    </location>
</feature>
<feature type="modified residue" description="Phosphoserine" evidence="2">
    <location>
        <position position="674"/>
    </location>
</feature>
<feature type="glycosylation site" description="N-linked (GlcNAc...) asparagine" evidence="3">
    <location>
        <position position="35"/>
    </location>
</feature>
<feature type="glycosylation site" description="N-linked (GlcNAc...) asparagine" evidence="3">
    <location>
        <position position="332"/>
    </location>
</feature>
<feature type="glycosylation site" description="N-linked (GlcNAc...) asparagine" evidence="3">
    <location>
        <position position="413"/>
    </location>
</feature>
<feature type="glycosylation site" description="N-linked (GlcNAc...) asparagine" evidence="3">
    <location>
        <position position="425"/>
    </location>
</feature>
<feature type="glycosylation site" description="N-linked (GlcNAc...) asparagine" evidence="3">
    <location>
        <position position="440"/>
    </location>
</feature>
<feature type="glycosylation site" description="N-linked (GlcNAc...) asparagine" evidence="3">
    <location>
        <position position="453"/>
    </location>
</feature>
<feature type="glycosylation site" description="N-linked (GlcNAc...) asparagine" evidence="3">
    <location>
        <position position="508"/>
    </location>
</feature>
<feature type="glycosylation site" description="N-linked (GlcNAc...) asparagine" evidence="3">
    <location>
        <position position="520"/>
    </location>
</feature>
<feature type="disulfide bond" evidence="4">
    <location>
        <begin position="42"/>
        <end position="91"/>
    </location>
</feature>
<feature type="disulfide bond" evidence="4">
    <location>
        <begin position="133"/>
        <end position="184"/>
    </location>
</feature>
<feature type="disulfide bond" evidence="4">
    <location>
        <begin position="272"/>
        <end position="350"/>
    </location>
</feature>
<feature type="disulfide bond" evidence="4">
    <location>
        <begin position="395"/>
        <end position="443"/>
    </location>
</feature>
<feature type="disulfide bond" evidence="4">
    <location>
        <begin position="486"/>
        <end position="538"/>
    </location>
</feature>
<organism>
    <name type="scientific">Drosophila sechellia</name>
    <name type="common">Fruit fly</name>
    <dbReference type="NCBI Taxonomy" id="7238"/>
    <lineage>
        <taxon>Eukaryota</taxon>
        <taxon>Metazoa</taxon>
        <taxon>Ecdysozoa</taxon>
        <taxon>Arthropoda</taxon>
        <taxon>Hexapoda</taxon>
        <taxon>Insecta</taxon>
        <taxon>Pterygota</taxon>
        <taxon>Neoptera</taxon>
        <taxon>Endopterygota</taxon>
        <taxon>Diptera</taxon>
        <taxon>Brachycera</taxon>
        <taxon>Muscomorpha</taxon>
        <taxon>Ephydroidea</taxon>
        <taxon>Drosophilidae</taxon>
        <taxon>Drosophila</taxon>
        <taxon>Sophophora</taxon>
    </lineage>
</organism>
<keyword id="KW-0130">Cell adhesion</keyword>
<keyword id="KW-1003">Cell membrane</keyword>
<keyword id="KW-1015">Disulfide bond</keyword>
<keyword id="KW-0325">Glycoprotein</keyword>
<keyword id="KW-0393">Immunoglobulin domain</keyword>
<keyword id="KW-0472">Membrane</keyword>
<keyword id="KW-0524">Neurogenesis</keyword>
<keyword id="KW-0597">Phosphoprotein</keyword>
<keyword id="KW-0675">Receptor</keyword>
<keyword id="KW-1185">Reference proteome</keyword>
<keyword id="KW-0677">Repeat</keyword>
<keyword id="KW-0732">Signal</keyword>
<keyword id="KW-0812">Transmembrane</keyword>
<keyword id="KW-1133">Transmembrane helix</keyword>
<reference evidence="8" key="1">
    <citation type="journal article" date="2007" name="Nature">
        <title>Evolution of genes and genomes on the Drosophila phylogeny.</title>
        <authorList>
            <consortium name="Drosophila 12 genomes consortium"/>
        </authorList>
    </citation>
    <scope>NUCLEOTIDE SEQUENCE [LARGE SCALE GENOMIC DNA]</scope>
    <source>
        <strain evidence="8">Rob3c / Tucson 14021-0248.25</strain>
    </source>
</reference>
<accession>B4HNW4</accession>